<proteinExistence type="inferred from homology"/>
<feature type="chain" id="PRO_0000201362" description="UTP--glucose-1-phosphate uridylyltransferase">
    <location>
        <begin position="1"/>
        <end position="279"/>
    </location>
</feature>
<name>GALU2_PSEAI</name>
<sequence length="279" mass="30940">MIKKYLFPAAGYGTRFLPATKAMPKEMLPVVNKPLIQYGVEEALDAGLNEISIVTGRGKRALEDHFDISYELENQIKGTDKEKYLVGIRKLLDECSFSYTRQTQMKGLGHAILTGRPLIGDEPFAVVLADDLCVNLEGDGVLTQMVKLYQKYRCTIVAVMEVNPTETNKYGVIAGDDIGDGLIRVRDMVEKPAPEDAPSNLAIIGRYILTPDIFKLIEETEPGKGGEIQITDALLKQAKDGCVIAYKFKGQRFDCGGAEGYIEATNFCYEHFYKTGKAY</sequence>
<protein>
    <recommendedName>
        <fullName>UTP--glucose-1-phosphate uridylyltransferase</fullName>
        <ecNumber>2.7.7.9</ecNumber>
    </recommendedName>
    <alternativeName>
        <fullName>Alpha-D-glucosyl-1-phosphate uridylyltransferase</fullName>
    </alternativeName>
    <alternativeName>
        <fullName>UDP-glucose pyrophosphorylase</fullName>
        <shortName>UDPGP</shortName>
    </alternativeName>
    <alternativeName>
        <fullName>Uridine diphosphoglucose pyrophosphorylase</fullName>
    </alternativeName>
</protein>
<gene>
    <name type="primary">galU</name>
</gene>
<comment type="function">
    <text evidence="1">May play a role in stationary phase survival.</text>
</comment>
<comment type="catalytic activity">
    <reaction>
        <text>alpha-D-glucose 1-phosphate + UTP + H(+) = UDP-alpha-D-glucose + diphosphate</text>
        <dbReference type="Rhea" id="RHEA:19889"/>
        <dbReference type="ChEBI" id="CHEBI:15378"/>
        <dbReference type="ChEBI" id="CHEBI:33019"/>
        <dbReference type="ChEBI" id="CHEBI:46398"/>
        <dbReference type="ChEBI" id="CHEBI:58601"/>
        <dbReference type="ChEBI" id="CHEBI:58885"/>
        <dbReference type="EC" id="2.7.7.9"/>
    </reaction>
</comment>
<comment type="similarity">
    <text evidence="2">Belongs to the UDPGP type 2 family.</text>
</comment>
<keyword id="KW-0548">Nucleotidyltransferase</keyword>
<keyword id="KW-0808">Transferase</keyword>
<accession>Q59633</accession>
<dbReference type="EC" id="2.7.7.9"/>
<dbReference type="EMBL" id="U03751">
    <property type="protein sequence ID" value="AAB01486.1"/>
    <property type="molecule type" value="Genomic_DNA"/>
</dbReference>
<dbReference type="SMR" id="Q59633"/>
<dbReference type="GO" id="GO:0003983">
    <property type="term" value="F:UTP:glucose-1-phosphate uridylyltransferase activity"/>
    <property type="evidence" value="ECO:0007669"/>
    <property type="project" value="UniProtKB-EC"/>
</dbReference>
<dbReference type="GO" id="GO:0009058">
    <property type="term" value="P:biosynthetic process"/>
    <property type="evidence" value="ECO:0007669"/>
    <property type="project" value="InterPro"/>
</dbReference>
<dbReference type="GO" id="GO:0006011">
    <property type="term" value="P:UDP-alpha-D-glucose metabolic process"/>
    <property type="evidence" value="ECO:0007669"/>
    <property type="project" value="InterPro"/>
</dbReference>
<dbReference type="CDD" id="cd02541">
    <property type="entry name" value="UGPase_prokaryotic"/>
    <property type="match status" value="1"/>
</dbReference>
<dbReference type="FunFam" id="3.90.550.10:FF:000045">
    <property type="entry name" value="UTP--glucose-1-phosphate uridylyltransferase"/>
    <property type="match status" value="1"/>
</dbReference>
<dbReference type="Gene3D" id="3.90.550.10">
    <property type="entry name" value="Spore Coat Polysaccharide Biosynthesis Protein SpsA, Chain A"/>
    <property type="match status" value="1"/>
</dbReference>
<dbReference type="InterPro" id="IPR005771">
    <property type="entry name" value="GalU_uridylyltTrfase_bac/arc"/>
</dbReference>
<dbReference type="InterPro" id="IPR005835">
    <property type="entry name" value="NTP_transferase_dom"/>
</dbReference>
<dbReference type="InterPro" id="IPR029044">
    <property type="entry name" value="Nucleotide-diphossugar_trans"/>
</dbReference>
<dbReference type="NCBIfam" id="TIGR01099">
    <property type="entry name" value="galU"/>
    <property type="match status" value="1"/>
</dbReference>
<dbReference type="PANTHER" id="PTHR43197">
    <property type="entry name" value="UTP--GLUCOSE-1-PHOSPHATE URIDYLYLTRANSFERASE"/>
    <property type="match status" value="1"/>
</dbReference>
<dbReference type="PANTHER" id="PTHR43197:SF1">
    <property type="entry name" value="UTP--GLUCOSE-1-PHOSPHATE URIDYLYLTRANSFERASE"/>
    <property type="match status" value="1"/>
</dbReference>
<dbReference type="Pfam" id="PF00483">
    <property type="entry name" value="NTP_transferase"/>
    <property type="match status" value="1"/>
</dbReference>
<dbReference type="SUPFAM" id="SSF53448">
    <property type="entry name" value="Nucleotide-diphospho-sugar transferases"/>
    <property type="match status" value="1"/>
</dbReference>
<organism>
    <name type="scientific">Pseudomonas aeruginosa</name>
    <dbReference type="NCBI Taxonomy" id="287"/>
    <lineage>
        <taxon>Bacteria</taxon>
        <taxon>Pseudomonadati</taxon>
        <taxon>Pseudomonadota</taxon>
        <taxon>Gammaproteobacteria</taxon>
        <taxon>Pseudomonadales</taxon>
        <taxon>Pseudomonadaceae</taxon>
        <taxon>Pseudomonas</taxon>
    </lineage>
</organism>
<evidence type="ECO:0000250" key="1"/>
<evidence type="ECO:0000305" key="2"/>
<reference key="1">
    <citation type="submission" date="1993-12" db="EMBL/GenBank/DDBJ databases">
        <title>Identification and characterization of UDPglucose pyrophosphorylase encoding gene in Pseudomonas aeruginosa ATCC10145.</title>
        <authorList>
            <person name="Chang H."/>
            <person name="Lee C."/>
            <person name="Peng H."/>
        </authorList>
    </citation>
    <scope>NUCLEOTIDE SEQUENCE [GENOMIC DNA]</scope>
    <source>
        <strain>ATCC 10145 / DSM 50071 / JCM 5962 / LMG 1242 / NBRC 12689 / NCIMB 8295 / NCTC 10332 / NRRL B-771</strain>
    </source>
</reference>